<accession>P85350</accession>
<feature type="chain" id="PRO_0000315887" description="Blight-associated protein p12">
    <location>
        <begin position="1" status="less than"/>
        <end position="10" status="greater than"/>
    </location>
</feature>
<feature type="non-terminal residue" evidence="2">
    <location>
        <position position="1"/>
    </location>
</feature>
<feature type="non-terminal residue" evidence="2">
    <location>
        <position position="10"/>
    </location>
</feature>
<name>BAP12_CYCRE</name>
<comment type="subcellular location">
    <subcellularLocation>
        <location evidence="1">Secreted</location>
        <location evidence="1">Cell wall</location>
    </subcellularLocation>
</comment>
<sequence length="10" mass="1096">IVDYCPAGCR</sequence>
<reference evidence="3" key="1">
    <citation type="journal article" date="2009" name="J. Plant Physiol.">
        <title>Analysis of the soluble cell wall proteome of gymnosperms.</title>
        <authorList>
            <person name="Uzal E.N."/>
            <person name="Gomez-Ros L.V."/>
            <person name="Hernandez J.A."/>
            <person name="Pedreno M.A."/>
            <person name="Cuello J."/>
            <person name="Ros Barcelo A."/>
        </authorList>
    </citation>
    <scope>PROTEIN SEQUENCE</scope>
    <scope>SUBCELLULAR LOCATION</scope>
    <source>
        <tissue evidence="1">Callus</tissue>
    </source>
</reference>
<dbReference type="GO" id="GO:0005576">
    <property type="term" value="C:extracellular region"/>
    <property type="evidence" value="ECO:0007669"/>
    <property type="project" value="UniProtKB-KW"/>
</dbReference>
<evidence type="ECO:0000269" key="1">
    <source>
    </source>
</evidence>
<evidence type="ECO:0000303" key="2">
    <source>
    </source>
</evidence>
<evidence type="ECO:0000305" key="3"/>
<keyword id="KW-0134">Cell wall</keyword>
<keyword id="KW-0903">Direct protein sequencing</keyword>
<keyword id="KW-0964">Secreted</keyword>
<proteinExistence type="evidence at protein level"/>
<protein>
    <recommendedName>
        <fullName>Blight-associated protein p12</fullName>
    </recommendedName>
</protein>
<organism>
    <name type="scientific">Cycas revoluta</name>
    <name type="common">Sago palm</name>
    <dbReference type="NCBI Taxonomy" id="3396"/>
    <lineage>
        <taxon>Eukaryota</taxon>
        <taxon>Viridiplantae</taxon>
        <taxon>Streptophyta</taxon>
        <taxon>Embryophyta</taxon>
        <taxon>Tracheophyta</taxon>
        <taxon>Spermatophyta</taxon>
        <taxon>Cycadidae</taxon>
        <taxon>Cycadales</taxon>
        <taxon>Cycadaceae</taxon>
        <taxon>Cycas</taxon>
    </lineage>
</organism>